<name>DNLJ_GEOUR</name>
<reference key="1">
    <citation type="submission" date="2007-05" db="EMBL/GenBank/DDBJ databases">
        <title>Complete sequence of Geobacter uraniireducens Rf4.</title>
        <authorList>
            <consortium name="US DOE Joint Genome Institute"/>
            <person name="Copeland A."/>
            <person name="Lucas S."/>
            <person name="Lapidus A."/>
            <person name="Barry K."/>
            <person name="Detter J.C."/>
            <person name="Glavina del Rio T."/>
            <person name="Hammon N."/>
            <person name="Israni S."/>
            <person name="Dalin E."/>
            <person name="Tice H."/>
            <person name="Pitluck S."/>
            <person name="Chertkov O."/>
            <person name="Brettin T."/>
            <person name="Bruce D."/>
            <person name="Han C."/>
            <person name="Schmutz J."/>
            <person name="Larimer F."/>
            <person name="Land M."/>
            <person name="Hauser L."/>
            <person name="Kyrpides N."/>
            <person name="Mikhailova N."/>
            <person name="Shelobolina E."/>
            <person name="Aklujkar M."/>
            <person name="Lovley D."/>
            <person name="Richardson P."/>
        </authorList>
    </citation>
    <scope>NUCLEOTIDE SEQUENCE [LARGE SCALE GENOMIC DNA]</scope>
    <source>
        <strain>ATCC BAA-1134 / JCM 13001 / Rf4</strain>
    </source>
</reference>
<dbReference type="EC" id="6.5.1.2" evidence="1"/>
<dbReference type="EMBL" id="CP000698">
    <property type="protein sequence ID" value="ABQ25506.1"/>
    <property type="molecule type" value="Genomic_DNA"/>
</dbReference>
<dbReference type="RefSeq" id="WP_011938224.1">
    <property type="nucleotide sequence ID" value="NC_009483.1"/>
</dbReference>
<dbReference type="SMR" id="A5GA98"/>
<dbReference type="STRING" id="351605.Gura_1305"/>
<dbReference type="KEGG" id="gur:Gura_1305"/>
<dbReference type="HOGENOM" id="CLU_007764_2_1_7"/>
<dbReference type="OrthoDB" id="9759736at2"/>
<dbReference type="Proteomes" id="UP000006695">
    <property type="component" value="Chromosome"/>
</dbReference>
<dbReference type="GO" id="GO:0005829">
    <property type="term" value="C:cytosol"/>
    <property type="evidence" value="ECO:0007669"/>
    <property type="project" value="TreeGrafter"/>
</dbReference>
<dbReference type="GO" id="GO:0003677">
    <property type="term" value="F:DNA binding"/>
    <property type="evidence" value="ECO:0007669"/>
    <property type="project" value="InterPro"/>
</dbReference>
<dbReference type="GO" id="GO:0003911">
    <property type="term" value="F:DNA ligase (NAD+) activity"/>
    <property type="evidence" value="ECO:0007669"/>
    <property type="project" value="UniProtKB-UniRule"/>
</dbReference>
<dbReference type="GO" id="GO:0046872">
    <property type="term" value="F:metal ion binding"/>
    <property type="evidence" value="ECO:0007669"/>
    <property type="project" value="UniProtKB-KW"/>
</dbReference>
<dbReference type="GO" id="GO:0006281">
    <property type="term" value="P:DNA repair"/>
    <property type="evidence" value="ECO:0007669"/>
    <property type="project" value="UniProtKB-KW"/>
</dbReference>
<dbReference type="GO" id="GO:0006260">
    <property type="term" value="P:DNA replication"/>
    <property type="evidence" value="ECO:0007669"/>
    <property type="project" value="UniProtKB-KW"/>
</dbReference>
<dbReference type="CDD" id="cd17748">
    <property type="entry name" value="BRCT_DNA_ligase_like"/>
    <property type="match status" value="1"/>
</dbReference>
<dbReference type="CDD" id="cd00114">
    <property type="entry name" value="LIGANc"/>
    <property type="match status" value="1"/>
</dbReference>
<dbReference type="FunFam" id="1.10.150.20:FF:000006">
    <property type="entry name" value="DNA ligase"/>
    <property type="match status" value="1"/>
</dbReference>
<dbReference type="FunFam" id="1.10.150.20:FF:000007">
    <property type="entry name" value="DNA ligase"/>
    <property type="match status" value="1"/>
</dbReference>
<dbReference type="FunFam" id="1.10.287.610:FF:000002">
    <property type="entry name" value="DNA ligase"/>
    <property type="match status" value="1"/>
</dbReference>
<dbReference type="FunFam" id="2.40.50.140:FF:000012">
    <property type="entry name" value="DNA ligase"/>
    <property type="match status" value="1"/>
</dbReference>
<dbReference type="FunFam" id="3.30.470.30:FF:000001">
    <property type="entry name" value="DNA ligase"/>
    <property type="match status" value="1"/>
</dbReference>
<dbReference type="FunFam" id="3.40.50.10190:FF:000054">
    <property type="entry name" value="DNA ligase"/>
    <property type="match status" value="1"/>
</dbReference>
<dbReference type="Gene3D" id="6.20.10.30">
    <property type="match status" value="1"/>
</dbReference>
<dbReference type="Gene3D" id="1.10.150.20">
    <property type="entry name" value="5' to 3' exonuclease, C-terminal subdomain"/>
    <property type="match status" value="2"/>
</dbReference>
<dbReference type="Gene3D" id="3.40.50.10190">
    <property type="entry name" value="BRCT domain"/>
    <property type="match status" value="1"/>
</dbReference>
<dbReference type="Gene3D" id="3.30.470.30">
    <property type="entry name" value="DNA ligase/mRNA capping enzyme"/>
    <property type="match status" value="1"/>
</dbReference>
<dbReference type="Gene3D" id="1.10.287.610">
    <property type="entry name" value="Helix hairpin bin"/>
    <property type="match status" value="1"/>
</dbReference>
<dbReference type="Gene3D" id="2.40.50.140">
    <property type="entry name" value="Nucleic acid-binding proteins"/>
    <property type="match status" value="1"/>
</dbReference>
<dbReference type="HAMAP" id="MF_01588">
    <property type="entry name" value="DNA_ligase_A"/>
    <property type="match status" value="1"/>
</dbReference>
<dbReference type="InterPro" id="IPR001357">
    <property type="entry name" value="BRCT_dom"/>
</dbReference>
<dbReference type="InterPro" id="IPR036420">
    <property type="entry name" value="BRCT_dom_sf"/>
</dbReference>
<dbReference type="InterPro" id="IPR041663">
    <property type="entry name" value="DisA/LigA_HHH"/>
</dbReference>
<dbReference type="InterPro" id="IPR001679">
    <property type="entry name" value="DNA_ligase"/>
</dbReference>
<dbReference type="InterPro" id="IPR018239">
    <property type="entry name" value="DNA_ligase_AS"/>
</dbReference>
<dbReference type="InterPro" id="IPR033136">
    <property type="entry name" value="DNA_ligase_CS"/>
</dbReference>
<dbReference type="InterPro" id="IPR013839">
    <property type="entry name" value="DNAligase_adenylation"/>
</dbReference>
<dbReference type="InterPro" id="IPR013840">
    <property type="entry name" value="DNAligase_N"/>
</dbReference>
<dbReference type="InterPro" id="IPR003583">
    <property type="entry name" value="Hlx-hairpin-Hlx_DNA-bd_motif"/>
</dbReference>
<dbReference type="InterPro" id="IPR012340">
    <property type="entry name" value="NA-bd_OB-fold"/>
</dbReference>
<dbReference type="InterPro" id="IPR004150">
    <property type="entry name" value="NAD_DNA_ligase_OB"/>
</dbReference>
<dbReference type="InterPro" id="IPR010994">
    <property type="entry name" value="RuvA_2-like"/>
</dbReference>
<dbReference type="InterPro" id="IPR004149">
    <property type="entry name" value="Znf_DNAligase_C4"/>
</dbReference>
<dbReference type="NCBIfam" id="TIGR00575">
    <property type="entry name" value="dnlj"/>
    <property type="match status" value="1"/>
</dbReference>
<dbReference type="NCBIfam" id="NF005932">
    <property type="entry name" value="PRK07956.1"/>
    <property type="match status" value="1"/>
</dbReference>
<dbReference type="PANTHER" id="PTHR23389">
    <property type="entry name" value="CHROMOSOME TRANSMISSION FIDELITY FACTOR 18"/>
    <property type="match status" value="1"/>
</dbReference>
<dbReference type="PANTHER" id="PTHR23389:SF9">
    <property type="entry name" value="DNA LIGASE"/>
    <property type="match status" value="1"/>
</dbReference>
<dbReference type="Pfam" id="PF00533">
    <property type="entry name" value="BRCT"/>
    <property type="match status" value="1"/>
</dbReference>
<dbReference type="Pfam" id="PF01653">
    <property type="entry name" value="DNA_ligase_aden"/>
    <property type="match status" value="1"/>
</dbReference>
<dbReference type="Pfam" id="PF03120">
    <property type="entry name" value="DNA_ligase_OB"/>
    <property type="match status" value="1"/>
</dbReference>
<dbReference type="Pfam" id="PF03119">
    <property type="entry name" value="DNA_ligase_ZBD"/>
    <property type="match status" value="1"/>
</dbReference>
<dbReference type="Pfam" id="PF12826">
    <property type="entry name" value="HHH_2"/>
    <property type="match status" value="1"/>
</dbReference>
<dbReference type="Pfam" id="PF14520">
    <property type="entry name" value="HHH_5"/>
    <property type="match status" value="1"/>
</dbReference>
<dbReference type="Pfam" id="PF22745">
    <property type="entry name" value="Nlig-Ia"/>
    <property type="match status" value="1"/>
</dbReference>
<dbReference type="PIRSF" id="PIRSF001604">
    <property type="entry name" value="LigA"/>
    <property type="match status" value="1"/>
</dbReference>
<dbReference type="SMART" id="SM00292">
    <property type="entry name" value="BRCT"/>
    <property type="match status" value="1"/>
</dbReference>
<dbReference type="SMART" id="SM00278">
    <property type="entry name" value="HhH1"/>
    <property type="match status" value="4"/>
</dbReference>
<dbReference type="SMART" id="SM00532">
    <property type="entry name" value="LIGANc"/>
    <property type="match status" value="1"/>
</dbReference>
<dbReference type="SUPFAM" id="SSF52113">
    <property type="entry name" value="BRCT domain"/>
    <property type="match status" value="1"/>
</dbReference>
<dbReference type="SUPFAM" id="SSF56091">
    <property type="entry name" value="DNA ligase/mRNA capping enzyme, catalytic domain"/>
    <property type="match status" value="1"/>
</dbReference>
<dbReference type="SUPFAM" id="SSF50249">
    <property type="entry name" value="Nucleic acid-binding proteins"/>
    <property type="match status" value="1"/>
</dbReference>
<dbReference type="SUPFAM" id="SSF47781">
    <property type="entry name" value="RuvA domain 2-like"/>
    <property type="match status" value="1"/>
</dbReference>
<dbReference type="PROSITE" id="PS50172">
    <property type="entry name" value="BRCT"/>
    <property type="match status" value="1"/>
</dbReference>
<dbReference type="PROSITE" id="PS01055">
    <property type="entry name" value="DNA_LIGASE_N1"/>
    <property type="match status" value="1"/>
</dbReference>
<dbReference type="PROSITE" id="PS01056">
    <property type="entry name" value="DNA_LIGASE_N2"/>
    <property type="match status" value="1"/>
</dbReference>
<accession>A5GA98</accession>
<comment type="function">
    <text evidence="1">DNA ligase that catalyzes the formation of phosphodiester linkages between 5'-phosphoryl and 3'-hydroxyl groups in double-stranded DNA using NAD as a coenzyme and as the energy source for the reaction. It is essential for DNA replication and repair of damaged DNA.</text>
</comment>
<comment type="catalytic activity">
    <reaction evidence="1">
        <text>NAD(+) + (deoxyribonucleotide)n-3'-hydroxyl + 5'-phospho-(deoxyribonucleotide)m = (deoxyribonucleotide)n+m + AMP + beta-nicotinamide D-nucleotide.</text>
        <dbReference type="EC" id="6.5.1.2"/>
    </reaction>
</comment>
<comment type="cofactor">
    <cofactor evidence="1">
        <name>Mg(2+)</name>
        <dbReference type="ChEBI" id="CHEBI:18420"/>
    </cofactor>
    <cofactor evidence="1">
        <name>Mn(2+)</name>
        <dbReference type="ChEBI" id="CHEBI:29035"/>
    </cofactor>
</comment>
<comment type="similarity">
    <text evidence="1">Belongs to the NAD-dependent DNA ligase family. LigA subfamily.</text>
</comment>
<proteinExistence type="inferred from homology"/>
<gene>
    <name evidence="1" type="primary">ligA</name>
    <name type="ordered locus">Gura_1305</name>
</gene>
<protein>
    <recommendedName>
        <fullName evidence="1">DNA ligase</fullName>
        <ecNumber evidence="1">6.5.1.2</ecNumber>
    </recommendedName>
    <alternativeName>
        <fullName evidence="1">Polydeoxyribonucleotide synthase [NAD(+)]</fullName>
    </alternativeName>
</protein>
<feature type="chain" id="PRO_0000340353" description="DNA ligase">
    <location>
        <begin position="1"/>
        <end position="672"/>
    </location>
</feature>
<feature type="domain" description="BRCT" evidence="1">
    <location>
        <begin position="591"/>
        <end position="672"/>
    </location>
</feature>
<feature type="active site" description="N6-AMP-lysine intermediate" evidence="1">
    <location>
        <position position="119"/>
    </location>
</feature>
<feature type="binding site" evidence="1">
    <location>
        <begin position="34"/>
        <end position="38"/>
    </location>
    <ligand>
        <name>NAD(+)</name>
        <dbReference type="ChEBI" id="CHEBI:57540"/>
    </ligand>
</feature>
<feature type="binding site" evidence="1">
    <location>
        <begin position="83"/>
        <end position="84"/>
    </location>
    <ligand>
        <name>NAD(+)</name>
        <dbReference type="ChEBI" id="CHEBI:57540"/>
    </ligand>
</feature>
<feature type="binding site" evidence="1">
    <location>
        <position position="117"/>
    </location>
    <ligand>
        <name>NAD(+)</name>
        <dbReference type="ChEBI" id="CHEBI:57540"/>
    </ligand>
</feature>
<feature type="binding site" evidence="1">
    <location>
        <position position="140"/>
    </location>
    <ligand>
        <name>NAD(+)</name>
        <dbReference type="ChEBI" id="CHEBI:57540"/>
    </ligand>
</feature>
<feature type="binding site" evidence="1">
    <location>
        <position position="177"/>
    </location>
    <ligand>
        <name>NAD(+)</name>
        <dbReference type="ChEBI" id="CHEBI:57540"/>
    </ligand>
</feature>
<feature type="binding site" evidence="1">
    <location>
        <position position="293"/>
    </location>
    <ligand>
        <name>NAD(+)</name>
        <dbReference type="ChEBI" id="CHEBI:57540"/>
    </ligand>
</feature>
<feature type="binding site" evidence="1">
    <location>
        <position position="317"/>
    </location>
    <ligand>
        <name>NAD(+)</name>
        <dbReference type="ChEBI" id="CHEBI:57540"/>
    </ligand>
</feature>
<feature type="binding site" evidence="1">
    <location>
        <position position="411"/>
    </location>
    <ligand>
        <name>Zn(2+)</name>
        <dbReference type="ChEBI" id="CHEBI:29105"/>
    </ligand>
</feature>
<feature type="binding site" evidence="1">
    <location>
        <position position="414"/>
    </location>
    <ligand>
        <name>Zn(2+)</name>
        <dbReference type="ChEBI" id="CHEBI:29105"/>
    </ligand>
</feature>
<feature type="binding site" evidence="1">
    <location>
        <position position="429"/>
    </location>
    <ligand>
        <name>Zn(2+)</name>
        <dbReference type="ChEBI" id="CHEBI:29105"/>
    </ligand>
</feature>
<feature type="binding site" evidence="1">
    <location>
        <position position="434"/>
    </location>
    <ligand>
        <name>Zn(2+)</name>
        <dbReference type="ChEBI" id="CHEBI:29105"/>
    </ligand>
</feature>
<sequence>MDKQAAERRIQELHKEINRHNYLYYVEDRPEINDAEYDLLLRELQQLEKAYPDLVTADSPTQRVGAAPLEKFSQVTHRMPMLSLENAFNEEEMHDFDERIKRFLGLAAGDEIEYVCEPKMDGLAVELVYENGDFTVGSTRGDGYVGEDVTQNLRTVKTIPLSLAIATPPRLFEVRGEVYLGLAPFQKLNVEREEAGDPPFANPRNAAAGSLRQLDSRITARRPLSIFCYAAGSLEGHEFTSQSDLLNTIPGWGLPVNPLIRKVSGIGGVLAYYHEMSEKRESLPYEIDGVVVKVDSFDLQRELGEKTRSPRWAIAWKFPPRQAVTVVEEIVPQVGRTGVITPVAHLRPVEVSGVMVSRATLHNWEEMEKKDIRKGDTVVVERAGDVIPAVVKVITEKRKGDEQPLPIPANCPECGSEVVKIPGEVAVRCLGLSCPAQIRETIIHFASRHAMDIDGMGDKYIEQLLKLGLVKNVADLYYLKKDDFMRFERMGDKLAENLLGAIETSKQRELSRFIYALGIRHVGEHTAKLLANAFGSMENLEHASEEELLSIREVGPQVAQSIRTFFHNRNNIEVIDRMFNAGVKPSVEEKRVGGRFTGKTFVFTGALTRFTRDDAKRMVENEGGHAAGSVSKKTDFVVAGAEAGSKLDKARQLGVKVLTEDEFLAMLGVCRT</sequence>
<organism>
    <name type="scientific">Geotalea uraniireducens (strain Rf4)</name>
    <name type="common">Geobacter uraniireducens</name>
    <dbReference type="NCBI Taxonomy" id="351605"/>
    <lineage>
        <taxon>Bacteria</taxon>
        <taxon>Pseudomonadati</taxon>
        <taxon>Thermodesulfobacteriota</taxon>
        <taxon>Desulfuromonadia</taxon>
        <taxon>Geobacterales</taxon>
        <taxon>Geobacteraceae</taxon>
        <taxon>Geotalea</taxon>
    </lineage>
</organism>
<keyword id="KW-0227">DNA damage</keyword>
<keyword id="KW-0234">DNA repair</keyword>
<keyword id="KW-0235">DNA replication</keyword>
<keyword id="KW-0436">Ligase</keyword>
<keyword id="KW-0460">Magnesium</keyword>
<keyword id="KW-0464">Manganese</keyword>
<keyword id="KW-0479">Metal-binding</keyword>
<keyword id="KW-0520">NAD</keyword>
<keyword id="KW-1185">Reference proteome</keyword>
<keyword id="KW-0862">Zinc</keyword>
<evidence type="ECO:0000255" key="1">
    <source>
        <dbReference type="HAMAP-Rule" id="MF_01588"/>
    </source>
</evidence>